<protein>
    <recommendedName>
        <fullName evidence="1">Na(+)-translocating NADH-quinone reductase subunit E</fullName>
        <shortName evidence="1">Na(+)-NQR subunit E</shortName>
        <shortName evidence="1">Na(+)-translocating NQR subunit E</shortName>
        <ecNumber evidence="1">7.2.1.1</ecNumber>
    </recommendedName>
    <alternativeName>
        <fullName evidence="1">NQR complex subunit E</fullName>
    </alternativeName>
    <alternativeName>
        <fullName evidence="1">NQR-1 subunit E</fullName>
    </alternativeName>
</protein>
<keyword id="KW-0997">Cell inner membrane</keyword>
<keyword id="KW-1003">Cell membrane</keyword>
<keyword id="KW-0406">Ion transport</keyword>
<keyword id="KW-0472">Membrane</keyword>
<keyword id="KW-0520">NAD</keyword>
<keyword id="KW-0915">Sodium</keyword>
<keyword id="KW-0739">Sodium transport</keyword>
<keyword id="KW-1278">Translocase</keyword>
<keyword id="KW-0812">Transmembrane</keyword>
<keyword id="KW-1133">Transmembrane helix</keyword>
<keyword id="KW-0813">Transport</keyword>
<keyword id="KW-0830">Ubiquinone</keyword>
<dbReference type="EC" id="7.2.1.1" evidence="1"/>
<dbReference type="EMBL" id="CP000947">
    <property type="protein sequence ID" value="ACA31631.1"/>
    <property type="molecule type" value="Genomic_DNA"/>
</dbReference>
<dbReference type="RefSeq" id="WP_012340937.1">
    <property type="nucleotide sequence ID" value="NC_010519.1"/>
</dbReference>
<dbReference type="SMR" id="B0UWF8"/>
<dbReference type="STRING" id="228400.HSM_1843"/>
<dbReference type="GeneID" id="31488150"/>
<dbReference type="KEGG" id="hsm:HSM_1843"/>
<dbReference type="HOGENOM" id="CLU_095255_0_0_6"/>
<dbReference type="GO" id="GO:0009276">
    <property type="term" value="C:Gram-negative-bacterium-type cell wall"/>
    <property type="evidence" value="ECO:0007669"/>
    <property type="project" value="InterPro"/>
</dbReference>
<dbReference type="GO" id="GO:0005886">
    <property type="term" value="C:plasma membrane"/>
    <property type="evidence" value="ECO:0007669"/>
    <property type="project" value="UniProtKB-SubCell"/>
</dbReference>
<dbReference type="GO" id="GO:0016655">
    <property type="term" value="F:oxidoreductase activity, acting on NAD(P)H, quinone or similar compound as acceptor"/>
    <property type="evidence" value="ECO:0007669"/>
    <property type="project" value="UniProtKB-UniRule"/>
</dbReference>
<dbReference type="GO" id="GO:0022904">
    <property type="term" value="P:respiratory electron transport chain"/>
    <property type="evidence" value="ECO:0007669"/>
    <property type="project" value="InterPro"/>
</dbReference>
<dbReference type="GO" id="GO:0006814">
    <property type="term" value="P:sodium ion transport"/>
    <property type="evidence" value="ECO:0007669"/>
    <property type="project" value="UniProtKB-UniRule"/>
</dbReference>
<dbReference type="HAMAP" id="MF_00429">
    <property type="entry name" value="NqrE"/>
    <property type="match status" value="1"/>
</dbReference>
<dbReference type="InterPro" id="IPR003667">
    <property type="entry name" value="NqrDE/RnfAE"/>
</dbReference>
<dbReference type="InterPro" id="IPR050133">
    <property type="entry name" value="NqrDE/RnfAE_oxidrdctase"/>
</dbReference>
<dbReference type="InterPro" id="IPR010967">
    <property type="entry name" value="NqrE"/>
</dbReference>
<dbReference type="NCBIfam" id="TIGR01940">
    <property type="entry name" value="nqrE"/>
    <property type="match status" value="1"/>
</dbReference>
<dbReference type="PANTHER" id="PTHR30335">
    <property type="entry name" value="INTEGRAL MEMBRANE PROTEIN OF SOXR-REDUCING COMPLEX"/>
    <property type="match status" value="1"/>
</dbReference>
<dbReference type="PANTHER" id="PTHR30335:SF1">
    <property type="entry name" value="NA(+)-TRANSLOCATING NADH-QUINONE REDUCTASE SUBUNIT E"/>
    <property type="match status" value="1"/>
</dbReference>
<dbReference type="Pfam" id="PF02508">
    <property type="entry name" value="Rnf-Nqr"/>
    <property type="match status" value="1"/>
</dbReference>
<dbReference type="PIRSF" id="PIRSF006102">
    <property type="entry name" value="NQR_DE"/>
    <property type="match status" value="1"/>
</dbReference>
<proteinExistence type="inferred from homology"/>
<feature type="chain" id="PRO_1000191701" description="Na(+)-translocating NADH-quinone reductase subunit E">
    <location>
        <begin position="1"/>
        <end position="198"/>
    </location>
</feature>
<feature type="transmembrane region" description="Helical" evidence="1">
    <location>
        <begin position="11"/>
        <end position="31"/>
    </location>
</feature>
<feature type="transmembrane region" description="Helical" evidence="1">
    <location>
        <begin position="35"/>
        <end position="55"/>
    </location>
</feature>
<feature type="transmembrane region" description="Helical" evidence="1">
    <location>
        <begin position="77"/>
        <end position="97"/>
    </location>
</feature>
<feature type="transmembrane region" description="Helical" evidence="1">
    <location>
        <begin position="110"/>
        <end position="130"/>
    </location>
</feature>
<feature type="transmembrane region" description="Helical" evidence="1">
    <location>
        <begin position="140"/>
        <end position="160"/>
    </location>
</feature>
<feature type="transmembrane region" description="Helical" evidence="1">
    <location>
        <begin position="176"/>
        <end position="196"/>
    </location>
</feature>
<reference key="1">
    <citation type="submission" date="2008-02" db="EMBL/GenBank/DDBJ databases">
        <title>Complete sequence of Haemophilus somnus 2336.</title>
        <authorList>
            <consortium name="US DOE Joint Genome Institute"/>
            <person name="Siddaramappa S."/>
            <person name="Duncan A.J."/>
            <person name="Challacombe J.F."/>
            <person name="Rainey D."/>
            <person name="Gillaspy A.F."/>
            <person name="Carson M."/>
            <person name="Gipson J."/>
            <person name="Gipson M."/>
            <person name="Bruce D."/>
            <person name="Detter J.C."/>
            <person name="Han C.S."/>
            <person name="Land M."/>
            <person name="Tapia R."/>
            <person name="Thompson L.S."/>
            <person name="Orvis J."/>
            <person name="Zaitshik J."/>
            <person name="Barnes G."/>
            <person name="Brettin T.S."/>
            <person name="Dyer D.W."/>
            <person name="Inzana T.J."/>
        </authorList>
    </citation>
    <scope>NUCLEOTIDE SEQUENCE [LARGE SCALE GENOMIC DNA]</scope>
    <source>
        <strain>2336</strain>
    </source>
</reference>
<name>NQRE_HISS2</name>
<organism>
    <name type="scientific">Histophilus somni (strain 2336)</name>
    <name type="common">Haemophilus somnus</name>
    <dbReference type="NCBI Taxonomy" id="228400"/>
    <lineage>
        <taxon>Bacteria</taxon>
        <taxon>Pseudomonadati</taxon>
        <taxon>Pseudomonadota</taxon>
        <taxon>Gammaproteobacteria</taxon>
        <taxon>Pasteurellales</taxon>
        <taxon>Pasteurellaceae</taxon>
        <taxon>Histophilus</taxon>
    </lineage>
</organism>
<evidence type="ECO:0000255" key="1">
    <source>
        <dbReference type="HAMAP-Rule" id="MF_00429"/>
    </source>
</evidence>
<gene>
    <name evidence="1" type="primary">nqrE</name>
    <name type="ordered locus">HSM_1843</name>
</gene>
<comment type="function">
    <text evidence="1">NQR complex catalyzes the reduction of ubiquinone-1 to ubiquinol by two successive reactions, coupled with the transport of Na(+) ions from the cytoplasm to the periplasm. NqrA to NqrE are probably involved in the second step, the conversion of ubisemiquinone to ubiquinol.</text>
</comment>
<comment type="catalytic activity">
    <reaction evidence="1">
        <text>a ubiquinone + n Na(+)(in) + NADH + H(+) = a ubiquinol + n Na(+)(out) + NAD(+)</text>
        <dbReference type="Rhea" id="RHEA:47748"/>
        <dbReference type="Rhea" id="RHEA-COMP:9565"/>
        <dbReference type="Rhea" id="RHEA-COMP:9566"/>
        <dbReference type="ChEBI" id="CHEBI:15378"/>
        <dbReference type="ChEBI" id="CHEBI:16389"/>
        <dbReference type="ChEBI" id="CHEBI:17976"/>
        <dbReference type="ChEBI" id="CHEBI:29101"/>
        <dbReference type="ChEBI" id="CHEBI:57540"/>
        <dbReference type="ChEBI" id="CHEBI:57945"/>
        <dbReference type="EC" id="7.2.1.1"/>
    </reaction>
</comment>
<comment type="subunit">
    <text evidence="1">Composed of six subunits; NqrA, NqrB, NqrC, NqrD, NqrE and NqrF.</text>
</comment>
<comment type="subcellular location">
    <subcellularLocation>
        <location evidence="1">Cell inner membrane</location>
        <topology evidence="1">Multi-pass membrane protein</topology>
    </subcellularLocation>
</comment>
<comment type="similarity">
    <text evidence="1">Belongs to the NqrDE/RnfAE family.</text>
</comment>
<accession>B0UWF8</accession>
<sequence length="198" mass="21209">MEHYISLFVKSVFIENMALSFFLGMCTFLAVSKKVSTAFGLGVAVTVVLGISVPVNQLVYSLILKDGALIDGVDLSFLNFITFIGVIAALVQILEMILDKYFPALYNALGIFLPLITVNCAIFGGVSFMVQRDYNFAESIVYGIGAGTGWMLAIVALAGITEKMKYADVPAGLRGLGITFITVGLMALGFMSFSGVQL</sequence>